<reference key="1">
    <citation type="journal article" date="2010" name="Genome Biol. Evol.">
        <title>Continuing evolution of Burkholderia mallei through genome reduction and large-scale rearrangements.</title>
        <authorList>
            <person name="Losada L."/>
            <person name="Ronning C.M."/>
            <person name="DeShazer D."/>
            <person name="Woods D."/>
            <person name="Fedorova N."/>
            <person name="Kim H.S."/>
            <person name="Shabalina S.A."/>
            <person name="Pearson T.R."/>
            <person name="Brinkac L."/>
            <person name="Tan P."/>
            <person name="Nandi T."/>
            <person name="Crabtree J."/>
            <person name="Badger J."/>
            <person name="Beckstrom-Sternberg S."/>
            <person name="Saqib M."/>
            <person name="Schutzer S.E."/>
            <person name="Keim P."/>
            <person name="Nierman W.C."/>
        </authorList>
    </citation>
    <scope>NUCLEOTIDE SEQUENCE [LARGE SCALE GENOMIC DNA]</scope>
    <source>
        <strain>668</strain>
    </source>
</reference>
<proteinExistence type="inferred from homology"/>
<name>RLMH_BURP6</name>
<evidence type="ECO:0000255" key="1">
    <source>
        <dbReference type="HAMAP-Rule" id="MF_00658"/>
    </source>
</evidence>
<organism>
    <name type="scientific">Burkholderia pseudomallei (strain 668)</name>
    <dbReference type="NCBI Taxonomy" id="320373"/>
    <lineage>
        <taxon>Bacteria</taxon>
        <taxon>Pseudomonadati</taxon>
        <taxon>Pseudomonadota</taxon>
        <taxon>Betaproteobacteria</taxon>
        <taxon>Burkholderiales</taxon>
        <taxon>Burkholderiaceae</taxon>
        <taxon>Burkholderia</taxon>
        <taxon>pseudomallei group</taxon>
    </lineage>
</organism>
<sequence>MKLHIVAVGHKMPGWIASGFDEYAKRMPPELRIELREVKPELRSGSRTADSVMAAEQQRIEAALPKNARVVALDERGRDWTTMQLAQALPAWQQDGRDVAFVIGGADGLAPALKSRAELLLRVSSLTLPHGMVRVLLAEQLYRAWSITQNHPYHRA</sequence>
<accession>A3N7F4</accession>
<dbReference type="EC" id="2.1.1.177" evidence="1"/>
<dbReference type="EMBL" id="CP000570">
    <property type="protein sequence ID" value="ABN81755.1"/>
    <property type="molecule type" value="Genomic_DNA"/>
</dbReference>
<dbReference type="RefSeq" id="WP_004186098.1">
    <property type="nucleotide sequence ID" value="NC_009074.1"/>
</dbReference>
<dbReference type="SMR" id="A3N7F4"/>
<dbReference type="GeneID" id="93059640"/>
<dbReference type="KEGG" id="bpd:BURPS668_1226"/>
<dbReference type="HOGENOM" id="CLU_100552_1_0_4"/>
<dbReference type="GO" id="GO:0005737">
    <property type="term" value="C:cytoplasm"/>
    <property type="evidence" value="ECO:0007669"/>
    <property type="project" value="UniProtKB-SubCell"/>
</dbReference>
<dbReference type="GO" id="GO:0070038">
    <property type="term" value="F:rRNA (pseudouridine-N3-)-methyltransferase activity"/>
    <property type="evidence" value="ECO:0007669"/>
    <property type="project" value="UniProtKB-UniRule"/>
</dbReference>
<dbReference type="CDD" id="cd18081">
    <property type="entry name" value="RlmH-like"/>
    <property type="match status" value="1"/>
</dbReference>
<dbReference type="Gene3D" id="3.40.1280.10">
    <property type="match status" value="1"/>
</dbReference>
<dbReference type="HAMAP" id="MF_00658">
    <property type="entry name" value="23SrRNA_methyltr_H"/>
    <property type="match status" value="1"/>
</dbReference>
<dbReference type="InterPro" id="IPR029028">
    <property type="entry name" value="Alpha/beta_knot_MTases"/>
</dbReference>
<dbReference type="InterPro" id="IPR003742">
    <property type="entry name" value="RlmH-like"/>
</dbReference>
<dbReference type="InterPro" id="IPR029026">
    <property type="entry name" value="tRNA_m1G_MTases_N"/>
</dbReference>
<dbReference type="NCBIfam" id="NF000986">
    <property type="entry name" value="PRK00103.1-4"/>
    <property type="match status" value="1"/>
</dbReference>
<dbReference type="NCBIfam" id="TIGR00246">
    <property type="entry name" value="tRNA_RlmH_YbeA"/>
    <property type="match status" value="1"/>
</dbReference>
<dbReference type="PANTHER" id="PTHR33603">
    <property type="entry name" value="METHYLTRANSFERASE"/>
    <property type="match status" value="1"/>
</dbReference>
<dbReference type="PANTHER" id="PTHR33603:SF1">
    <property type="entry name" value="RIBOSOMAL RNA LARGE SUBUNIT METHYLTRANSFERASE H"/>
    <property type="match status" value="1"/>
</dbReference>
<dbReference type="Pfam" id="PF02590">
    <property type="entry name" value="SPOUT_MTase"/>
    <property type="match status" value="1"/>
</dbReference>
<dbReference type="PIRSF" id="PIRSF004505">
    <property type="entry name" value="MT_bac"/>
    <property type="match status" value="1"/>
</dbReference>
<dbReference type="SUPFAM" id="SSF75217">
    <property type="entry name" value="alpha/beta knot"/>
    <property type="match status" value="1"/>
</dbReference>
<keyword id="KW-0963">Cytoplasm</keyword>
<keyword id="KW-0489">Methyltransferase</keyword>
<keyword id="KW-0698">rRNA processing</keyword>
<keyword id="KW-0949">S-adenosyl-L-methionine</keyword>
<keyword id="KW-0808">Transferase</keyword>
<protein>
    <recommendedName>
        <fullName evidence="1">Ribosomal RNA large subunit methyltransferase H</fullName>
        <ecNumber evidence="1">2.1.1.177</ecNumber>
    </recommendedName>
    <alternativeName>
        <fullName evidence="1">23S rRNA (pseudouridine1915-N3)-methyltransferase</fullName>
    </alternativeName>
    <alternativeName>
        <fullName evidence="1">23S rRNA m3Psi1915 methyltransferase</fullName>
    </alternativeName>
    <alternativeName>
        <fullName evidence="1">rRNA (pseudouridine-N3-)-methyltransferase RlmH</fullName>
    </alternativeName>
</protein>
<feature type="chain" id="PRO_1000061768" description="Ribosomal RNA large subunit methyltransferase H">
    <location>
        <begin position="1"/>
        <end position="156"/>
    </location>
</feature>
<feature type="binding site" evidence="1">
    <location>
        <position position="73"/>
    </location>
    <ligand>
        <name>S-adenosyl-L-methionine</name>
        <dbReference type="ChEBI" id="CHEBI:59789"/>
    </ligand>
</feature>
<feature type="binding site" evidence="1">
    <location>
        <position position="104"/>
    </location>
    <ligand>
        <name>S-adenosyl-L-methionine</name>
        <dbReference type="ChEBI" id="CHEBI:59789"/>
    </ligand>
</feature>
<feature type="binding site" evidence="1">
    <location>
        <begin position="123"/>
        <end position="128"/>
    </location>
    <ligand>
        <name>S-adenosyl-L-methionine</name>
        <dbReference type="ChEBI" id="CHEBI:59789"/>
    </ligand>
</feature>
<comment type="function">
    <text evidence="1">Specifically methylates the pseudouridine at position 1915 (m3Psi1915) in 23S rRNA.</text>
</comment>
<comment type="catalytic activity">
    <reaction evidence="1">
        <text>pseudouridine(1915) in 23S rRNA + S-adenosyl-L-methionine = N(3)-methylpseudouridine(1915) in 23S rRNA + S-adenosyl-L-homocysteine + H(+)</text>
        <dbReference type="Rhea" id="RHEA:42752"/>
        <dbReference type="Rhea" id="RHEA-COMP:10221"/>
        <dbReference type="Rhea" id="RHEA-COMP:10222"/>
        <dbReference type="ChEBI" id="CHEBI:15378"/>
        <dbReference type="ChEBI" id="CHEBI:57856"/>
        <dbReference type="ChEBI" id="CHEBI:59789"/>
        <dbReference type="ChEBI" id="CHEBI:65314"/>
        <dbReference type="ChEBI" id="CHEBI:74486"/>
        <dbReference type="EC" id="2.1.1.177"/>
    </reaction>
</comment>
<comment type="subunit">
    <text evidence="1">Homodimer.</text>
</comment>
<comment type="subcellular location">
    <subcellularLocation>
        <location evidence="1">Cytoplasm</location>
    </subcellularLocation>
</comment>
<comment type="similarity">
    <text evidence="1">Belongs to the RNA methyltransferase RlmH family.</text>
</comment>
<gene>
    <name evidence="1" type="primary">rlmH</name>
    <name type="ordered locus">BURPS668_1226</name>
</gene>